<accession>C3MW94</accession>
<reference key="1">
    <citation type="journal article" date="2009" name="Proc. Natl. Acad. Sci. U.S.A.">
        <title>Biogeography of the Sulfolobus islandicus pan-genome.</title>
        <authorList>
            <person name="Reno M.L."/>
            <person name="Held N.L."/>
            <person name="Fields C.J."/>
            <person name="Burke P.V."/>
            <person name="Whitaker R.J."/>
        </authorList>
    </citation>
    <scope>NUCLEOTIDE SEQUENCE [LARGE SCALE GENOMIC DNA]</scope>
    <source>
        <strain>M.14.25 / Kamchatka #1</strain>
    </source>
</reference>
<evidence type="ECO:0000255" key="1">
    <source>
        <dbReference type="HAMAP-Rule" id="MF_00311"/>
    </source>
</evidence>
<name>AATE_SACI4</name>
<sequence>MDFEQLLDKSLNKVREEIKTELSKSLDEAIKLLNEGHTKIIQEYTQRINELITKTKEEIEGEKARLEVENKRTLLVEKEYWINKVYERVLEKIGEVVKTKEYKDAIQSILNKEIKEMEGEKITVYCSPNDKSTVEKVVGNNKNVTIKTDDKMLGGIRIYYEGSGLTRDFSLKLILDQVFDSMRGKISDMLFGGK</sequence>
<organism>
    <name type="scientific">Saccharolobus islandicus (strain M.14.25 / Kamchatka #1)</name>
    <name type="common">Sulfolobus islandicus</name>
    <dbReference type="NCBI Taxonomy" id="427317"/>
    <lineage>
        <taxon>Archaea</taxon>
        <taxon>Thermoproteota</taxon>
        <taxon>Thermoprotei</taxon>
        <taxon>Sulfolobales</taxon>
        <taxon>Sulfolobaceae</taxon>
        <taxon>Saccharolobus</taxon>
    </lineage>
</organism>
<protein>
    <recommendedName>
        <fullName evidence="1">A-type ATP synthase subunit E</fullName>
    </recommendedName>
</protein>
<gene>
    <name evidence="1" type="primary">atpE</name>
    <name type="ordered locus">M1425_1567</name>
</gene>
<dbReference type="EMBL" id="CP001400">
    <property type="protein sequence ID" value="ACP38316.1"/>
    <property type="molecule type" value="Genomic_DNA"/>
</dbReference>
<dbReference type="RefSeq" id="WP_012711560.1">
    <property type="nucleotide sequence ID" value="NC_012588.1"/>
</dbReference>
<dbReference type="SMR" id="C3MW94"/>
<dbReference type="KEGG" id="sia:M1425_1567"/>
<dbReference type="HOGENOM" id="CLU_1412391_0_0_2"/>
<dbReference type="Proteomes" id="UP000001350">
    <property type="component" value="Chromosome"/>
</dbReference>
<dbReference type="GO" id="GO:0005886">
    <property type="term" value="C:plasma membrane"/>
    <property type="evidence" value="ECO:0007669"/>
    <property type="project" value="UniProtKB-SubCell"/>
</dbReference>
<dbReference type="GO" id="GO:0033178">
    <property type="term" value="C:proton-transporting two-sector ATPase complex, catalytic domain"/>
    <property type="evidence" value="ECO:0007669"/>
    <property type="project" value="InterPro"/>
</dbReference>
<dbReference type="GO" id="GO:0005524">
    <property type="term" value="F:ATP binding"/>
    <property type="evidence" value="ECO:0007669"/>
    <property type="project" value="UniProtKB-UniRule"/>
</dbReference>
<dbReference type="GO" id="GO:0046933">
    <property type="term" value="F:proton-transporting ATP synthase activity, rotational mechanism"/>
    <property type="evidence" value="ECO:0007669"/>
    <property type="project" value="UniProtKB-UniRule"/>
</dbReference>
<dbReference type="GO" id="GO:0046961">
    <property type="term" value="F:proton-transporting ATPase activity, rotational mechanism"/>
    <property type="evidence" value="ECO:0007669"/>
    <property type="project" value="InterPro"/>
</dbReference>
<dbReference type="GO" id="GO:0042777">
    <property type="term" value="P:proton motive force-driven plasma membrane ATP synthesis"/>
    <property type="evidence" value="ECO:0007669"/>
    <property type="project" value="UniProtKB-UniRule"/>
</dbReference>
<dbReference type="Gene3D" id="3.30.2320.30">
    <property type="entry name" value="ATP synthase, E subunit, C-terminal"/>
    <property type="match status" value="1"/>
</dbReference>
<dbReference type="HAMAP" id="MF_00311">
    <property type="entry name" value="ATP_synth_E_arch"/>
    <property type="match status" value="1"/>
</dbReference>
<dbReference type="InterPro" id="IPR038495">
    <property type="entry name" value="ATPase_E_C"/>
</dbReference>
<dbReference type="InterPro" id="IPR002842">
    <property type="entry name" value="ATPase_V1_Esu"/>
</dbReference>
<dbReference type="Pfam" id="PF01991">
    <property type="entry name" value="vATP-synt_E"/>
    <property type="match status" value="1"/>
</dbReference>
<dbReference type="SUPFAM" id="SSF160527">
    <property type="entry name" value="V-type ATPase subunit E-like"/>
    <property type="match status" value="1"/>
</dbReference>
<comment type="function">
    <text evidence="1">Component of the A-type ATP synthase that produces ATP from ADP in the presence of a proton gradient across the membrane.</text>
</comment>
<comment type="subunit">
    <text evidence="1">Has multiple subunits with at least A(3), B(3), C, D, E, F, H, I and proteolipid K(x).</text>
</comment>
<comment type="subcellular location">
    <subcellularLocation>
        <location evidence="1">Cell membrane</location>
        <topology evidence="1">Peripheral membrane protein</topology>
    </subcellularLocation>
</comment>
<comment type="similarity">
    <text evidence="1">Belongs to the V-ATPase E subunit family.</text>
</comment>
<keyword id="KW-0066">ATP synthesis</keyword>
<keyword id="KW-1003">Cell membrane</keyword>
<keyword id="KW-0375">Hydrogen ion transport</keyword>
<keyword id="KW-0406">Ion transport</keyword>
<keyword id="KW-0472">Membrane</keyword>
<keyword id="KW-0813">Transport</keyword>
<proteinExistence type="inferred from homology"/>
<feature type="chain" id="PRO_1000205054" description="A-type ATP synthase subunit E">
    <location>
        <begin position="1"/>
        <end position="194"/>
    </location>
</feature>